<proteinExistence type="inferred from homology"/>
<gene>
    <name evidence="1" type="primary">glmM</name>
    <name type="ordered locus">SbBS512_E3594</name>
</gene>
<feature type="chain" id="PRO_1000201142" description="Phosphoglucosamine mutase">
    <location>
        <begin position="1"/>
        <end position="445"/>
    </location>
</feature>
<feature type="active site" description="Phosphoserine intermediate" evidence="1">
    <location>
        <position position="102"/>
    </location>
</feature>
<feature type="binding site" description="via phosphate group" evidence="1">
    <location>
        <position position="102"/>
    </location>
    <ligand>
        <name>Mg(2+)</name>
        <dbReference type="ChEBI" id="CHEBI:18420"/>
    </ligand>
</feature>
<feature type="binding site" evidence="1">
    <location>
        <position position="241"/>
    </location>
    <ligand>
        <name>Mg(2+)</name>
        <dbReference type="ChEBI" id="CHEBI:18420"/>
    </ligand>
</feature>
<feature type="binding site" evidence="1">
    <location>
        <position position="243"/>
    </location>
    <ligand>
        <name>Mg(2+)</name>
        <dbReference type="ChEBI" id="CHEBI:18420"/>
    </ligand>
</feature>
<feature type="binding site" evidence="1">
    <location>
        <position position="245"/>
    </location>
    <ligand>
        <name>Mg(2+)</name>
        <dbReference type="ChEBI" id="CHEBI:18420"/>
    </ligand>
</feature>
<feature type="modified residue" description="Phosphoserine" evidence="1">
    <location>
        <position position="102"/>
    </location>
</feature>
<name>GLMM_SHIB3</name>
<organism>
    <name type="scientific">Shigella boydii serotype 18 (strain CDC 3083-94 / BS512)</name>
    <dbReference type="NCBI Taxonomy" id="344609"/>
    <lineage>
        <taxon>Bacteria</taxon>
        <taxon>Pseudomonadati</taxon>
        <taxon>Pseudomonadota</taxon>
        <taxon>Gammaproteobacteria</taxon>
        <taxon>Enterobacterales</taxon>
        <taxon>Enterobacteriaceae</taxon>
        <taxon>Shigella</taxon>
    </lineage>
</organism>
<keyword id="KW-0413">Isomerase</keyword>
<keyword id="KW-0460">Magnesium</keyword>
<keyword id="KW-0479">Metal-binding</keyword>
<keyword id="KW-0597">Phosphoprotein</keyword>
<keyword id="KW-1185">Reference proteome</keyword>
<dbReference type="EC" id="5.4.2.10" evidence="1"/>
<dbReference type="EMBL" id="CP001063">
    <property type="protein sequence ID" value="ACD08714.1"/>
    <property type="molecule type" value="Genomic_DNA"/>
</dbReference>
<dbReference type="RefSeq" id="WP_000071134.1">
    <property type="nucleotide sequence ID" value="NC_010658.1"/>
</dbReference>
<dbReference type="SMR" id="B2U201"/>
<dbReference type="STRING" id="344609.SbBS512_E3594"/>
<dbReference type="GeneID" id="75206032"/>
<dbReference type="KEGG" id="sbc:SbBS512_E3594"/>
<dbReference type="HOGENOM" id="CLU_016950_7_0_6"/>
<dbReference type="Proteomes" id="UP000001030">
    <property type="component" value="Chromosome"/>
</dbReference>
<dbReference type="GO" id="GO:0005829">
    <property type="term" value="C:cytosol"/>
    <property type="evidence" value="ECO:0007669"/>
    <property type="project" value="TreeGrafter"/>
</dbReference>
<dbReference type="GO" id="GO:0000287">
    <property type="term" value="F:magnesium ion binding"/>
    <property type="evidence" value="ECO:0007669"/>
    <property type="project" value="UniProtKB-UniRule"/>
</dbReference>
<dbReference type="GO" id="GO:0008966">
    <property type="term" value="F:phosphoglucosamine mutase activity"/>
    <property type="evidence" value="ECO:0007669"/>
    <property type="project" value="UniProtKB-UniRule"/>
</dbReference>
<dbReference type="GO" id="GO:0004615">
    <property type="term" value="F:phosphomannomutase activity"/>
    <property type="evidence" value="ECO:0007669"/>
    <property type="project" value="TreeGrafter"/>
</dbReference>
<dbReference type="GO" id="GO:0005975">
    <property type="term" value="P:carbohydrate metabolic process"/>
    <property type="evidence" value="ECO:0007669"/>
    <property type="project" value="InterPro"/>
</dbReference>
<dbReference type="GO" id="GO:0009252">
    <property type="term" value="P:peptidoglycan biosynthetic process"/>
    <property type="evidence" value="ECO:0007669"/>
    <property type="project" value="TreeGrafter"/>
</dbReference>
<dbReference type="GO" id="GO:0006048">
    <property type="term" value="P:UDP-N-acetylglucosamine biosynthetic process"/>
    <property type="evidence" value="ECO:0007669"/>
    <property type="project" value="TreeGrafter"/>
</dbReference>
<dbReference type="CDD" id="cd05802">
    <property type="entry name" value="GlmM"/>
    <property type="match status" value="1"/>
</dbReference>
<dbReference type="FunFam" id="3.30.310.50:FF:000001">
    <property type="entry name" value="Phosphoglucosamine mutase"/>
    <property type="match status" value="1"/>
</dbReference>
<dbReference type="FunFam" id="3.40.120.10:FF:000001">
    <property type="entry name" value="Phosphoglucosamine mutase"/>
    <property type="match status" value="1"/>
</dbReference>
<dbReference type="FunFam" id="3.40.120.10:FF:000002">
    <property type="entry name" value="Phosphoglucosamine mutase"/>
    <property type="match status" value="1"/>
</dbReference>
<dbReference type="Gene3D" id="3.40.120.10">
    <property type="entry name" value="Alpha-D-Glucose-1,6-Bisphosphate, subunit A, domain 3"/>
    <property type="match status" value="3"/>
</dbReference>
<dbReference type="Gene3D" id="3.30.310.50">
    <property type="entry name" value="Alpha-D-phosphohexomutase, C-terminal domain"/>
    <property type="match status" value="1"/>
</dbReference>
<dbReference type="HAMAP" id="MF_01554_B">
    <property type="entry name" value="GlmM_B"/>
    <property type="match status" value="1"/>
</dbReference>
<dbReference type="InterPro" id="IPR005844">
    <property type="entry name" value="A-D-PHexomutase_a/b/a-I"/>
</dbReference>
<dbReference type="InterPro" id="IPR016055">
    <property type="entry name" value="A-D-PHexomutase_a/b/a-I/II/III"/>
</dbReference>
<dbReference type="InterPro" id="IPR005845">
    <property type="entry name" value="A-D-PHexomutase_a/b/a-II"/>
</dbReference>
<dbReference type="InterPro" id="IPR005846">
    <property type="entry name" value="A-D-PHexomutase_a/b/a-III"/>
</dbReference>
<dbReference type="InterPro" id="IPR005843">
    <property type="entry name" value="A-D-PHexomutase_C"/>
</dbReference>
<dbReference type="InterPro" id="IPR036900">
    <property type="entry name" value="A-D-PHexomutase_C_sf"/>
</dbReference>
<dbReference type="InterPro" id="IPR016066">
    <property type="entry name" value="A-D-PHexomutase_CS"/>
</dbReference>
<dbReference type="InterPro" id="IPR005841">
    <property type="entry name" value="Alpha-D-phosphohexomutase_SF"/>
</dbReference>
<dbReference type="InterPro" id="IPR006352">
    <property type="entry name" value="GlmM_bact"/>
</dbReference>
<dbReference type="InterPro" id="IPR050060">
    <property type="entry name" value="Phosphoglucosamine_mutase"/>
</dbReference>
<dbReference type="NCBIfam" id="TIGR01455">
    <property type="entry name" value="glmM"/>
    <property type="match status" value="1"/>
</dbReference>
<dbReference type="NCBIfam" id="NF008139">
    <property type="entry name" value="PRK10887.1"/>
    <property type="match status" value="1"/>
</dbReference>
<dbReference type="PANTHER" id="PTHR42946:SF1">
    <property type="entry name" value="PHOSPHOGLUCOMUTASE (ALPHA-D-GLUCOSE-1,6-BISPHOSPHATE-DEPENDENT)"/>
    <property type="match status" value="1"/>
</dbReference>
<dbReference type="PANTHER" id="PTHR42946">
    <property type="entry name" value="PHOSPHOHEXOSE MUTASE"/>
    <property type="match status" value="1"/>
</dbReference>
<dbReference type="Pfam" id="PF02878">
    <property type="entry name" value="PGM_PMM_I"/>
    <property type="match status" value="1"/>
</dbReference>
<dbReference type="Pfam" id="PF02879">
    <property type="entry name" value="PGM_PMM_II"/>
    <property type="match status" value="1"/>
</dbReference>
<dbReference type="Pfam" id="PF02880">
    <property type="entry name" value="PGM_PMM_III"/>
    <property type="match status" value="1"/>
</dbReference>
<dbReference type="Pfam" id="PF00408">
    <property type="entry name" value="PGM_PMM_IV"/>
    <property type="match status" value="1"/>
</dbReference>
<dbReference type="PRINTS" id="PR00509">
    <property type="entry name" value="PGMPMM"/>
</dbReference>
<dbReference type="SUPFAM" id="SSF55957">
    <property type="entry name" value="Phosphoglucomutase, C-terminal domain"/>
    <property type="match status" value="1"/>
</dbReference>
<dbReference type="SUPFAM" id="SSF53738">
    <property type="entry name" value="Phosphoglucomutase, first 3 domains"/>
    <property type="match status" value="3"/>
</dbReference>
<dbReference type="PROSITE" id="PS00710">
    <property type="entry name" value="PGM_PMM"/>
    <property type="match status" value="1"/>
</dbReference>
<protein>
    <recommendedName>
        <fullName evidence="1">Phosphoglucosamine mutase</fullName>
        <ecNumber evidence="1">5.4.2.10</ecNumber>
    </recommendedName>
</protein>
<comment type="function">
    <text evidence="1">Catalyzes the conversion of glucosamine-6-phosphate to glucosamine-1-phosphate.</text>
</comment>
<comment type="catalytic activity">
    <reaction evidence="1">
        <text>alpha-D-glucosamine 1-phosphate = D-glucosamine 6-phosphate</text>
        <dbReference type="Rhea" id="RHEA:23424"/>
        <dbReference type="ChEBI" id="CHEBI:58516"/>
        <dbReference type="ChEBI" id="CHEBI:58725"/>
        <dbReference type="EC" id="5.4.2.10"/>
    </reaction>
</comment>
<comment type="cofactor">
    <cofactor evidence="1">
        <name>Mg(2+)</name>
        <dbReference type="ChEBI" id="CHEBI:18420"/>
    </cofactor>
    <text evidence="1">Binds 1 Mg(2+) ion per subunit.</text>
</comment>
<comment type="PTM">
    <text evidence="1">Activated by phosphorylation.</text>
</comment>
<comment type="similarity">
    <text evidence="1">Belongs to the phosphohexose mutase family.</text>
</comment>
<reference key="1">
    <citation type="submission" date="2008-05" db="EMBL/GenBank/DDBJ databases">
        <title>Complete sequence of Shigella boydii serotype 18 strain BS512.</title>
        <authorList>
            <person name="Rasko D.A."/>
            <person name="Rosovitz M."/>
            <person name="Maurelli A.T."/>
            <person name="Myers G."/>
            <person name="Seshadri R."/>
            <person name="Cer R."/>
            <person name="Jiang L."/>
            <person name="Ravel J."/>
            <person name="Sebastian Y."/>
        </authorList>
    </citation>
    <scope>NUCLEOTIDE SEQUENCE [LARGE SCALE GENOMIC DNA]</scope>
    <source>
        <strain>CDC 3083-94 / BS512</strain>
    </source>
</reference>
<evidence type="ECO:0000255" key="1">
    <source>
        <dbReference type="HAMAP-Rule" id="MF_01554"/>
    </source>
</evidence>
<accession>B2U201</accession>
<sequence>MSNRKYFGTDGIRGRVGDAPITPDFVLKLGWAAGKVLARHGSRKIIIGKDTRISGYMLESALEAGLAAAGLSALFTGPMPTPAVAYLTRTFRAEAGIVISASHNPFYDNGIKFFSIDGTKLPDAVEEAIEAEMEKEISCVDSAELGKASRIVDAAGRYIEFCKATFPNELSLSELKIVVDCANGATYHIAPNVLRELGANVIAIGCEPNGVNINAEVGATDVRALQARVLAEKADLGIAFDGDGDRVIMVDHEGNKVDGDQIMYIIAREGLRQGQLRGGAVGTLMSNMGLELALKQLGIPFARAKVGDRYVLEKMQEKGWRIGAENSGHVILLDKTTTGDGIVAGLQVLAAMARNHMSLHDLCSGMKMFPQILVNVRYTAGSGDPLEHESVKAVTAEVEAALGNRGRVLLRKSGTEPLIRVMVEGEDEAQVTEFAHRIADAVKAV</sequence>